<proteinExistence type="inferred from homology"/>
<feature type="chain" id="PRO_1000002044" description="SsrA-binding protein">
    <location>
        <begin position="1"/>
        <end position="154"/>
    </location>
</feature>
<feature type="region of interest" description="Disordered" evidence="2">
    <location>
        <begin position="134"/>
        <end position="154"/>
    </location>
</feature>
<name>SSRP_NITV4</name>
<gene>
    <name evidence="1" type="primary">smpB</name>
    <name type="ordered locus">Dvul_2153</name>
</gene>
<organism>
    <name type="scientific">Nitratidesulfovibrio vulgaris (strain DP4)</name>
    <name type="common">Desulfovibrio vulgaris</name>
    <dbReference type="NCBI Taxonomy" id="391774"/>
    <lineage>
        <taxon>Bacteria</taxon>
        <taxon>Pseudomonadati</taxon>
        <taxon>Thermodesulfobacteriota</taxon>
        <taxon>Desulfovibrionia</taxon>
        <taxon>Desulfovibrionales</taxon>
        <taxon>Desulfovibrionaceae</taxon>
        <taxon>Nitratidesulfovibrio</taxon>
    </lineage>
</organism>
<keyword id="KW-0963">Cytoplasm</keyword>
<keyword id="KW-0694">RNA-binding</keyword>
<accession>A1VFF3</accession>
<sequence>MSKKAPGANVIAQNKKARHIYELSDNHEAGISLTGSEVKSLRAGHVNFRDSYVDFRNGEAFLVGLHIAPYDNAGYAQHDPDRDRKLLLHAHEIENLARSVEQKGYTVVPTKLYFARGKVKVDIAVGRGKKLHDQREDLKRRAEDRDTQRELARF</sequence>
<protein>
    <recommendedName>
        <fullName evidence="1">SsrA-binding protein</fullName>
    </recommendedName>
    <alternativeName>
        <fullName evidence="1">Small protein B</fullName>
    </alternativeName>
</protein>
<evidence type="ECO:0000255" key="1">
    <source>
        <dbReference type="HAMAP-Rule" id="MF_00023"/>
    </source>
</evidence>
<evidence type="ECO:0000256" key="2">
    <source>
        <dbReference type="SAM" id="MobiDB-lite"/>
    </source>
</evidence>
<dbReference type="EMBL" id="CP000527">
    <property type="protein sequence ID" value="ABM29169.1"/>
    <property type="molecule type" value="Genomic_DNA"/>
</dbReference>
<dbReference type="RefSeq" id="WP_010938129.1">
    <property type="nucleotide sequence ID" value="NC_008751.1"/>
</dbReference>
<dbReference type="SMR" id="A1VFF3"/>
<dbReference type="KEGG" id="dvl:Dvul_2153"/>
<dbReference type="HOGENOM" id="CLU_108953_0_0_7"/>
<dbReference type="Proteomes" id="UP000009173">
    <property type="component" value="Chromosome"/>
</dbReference>
<dbReference type="GO" id="GO:0005829">
    <property type="term" value="C:cytosol"/>
    <property type="evidence" value="ECO:0007669"/>
    <property type="project" value="TreeGrafter"/>
</dbReference>
<dbReference type="GO" id="GO:0003723">
    <property type="term" value="F:RNA binding"/>
    <property type="evidence" value="ECO:0007669"/>
    <property type="project" value="UniProtKB-UniRule"/>
</dbReference>
<dbReference type="GO" id="GO:0070929">
    <property type="term" value="P:trans-translation"/>
    <property type="evidence" value="ECO:0007669"/>
    <property type="project" value="UniProtKB-UniRule"/>
</dbReference>
<dbReference type="CDD" id="cd09294">
    <property type="entry name" value="SmpB"/>
    <property type="match status" value="1"/>
</dbReference>
<dbReference type="Gene3D" id="2.40.280.10">
    <property type="match status" value="1"/>
</dbReference>
<dbReference type="HAMAP" id="MF_00023">
    <property type="entry name" value="SmpB"/>
    <property type="match status" value="1"/>
</dbReference>
<dbReference type="InterPro" id="IPR023620">
    <property type="entry name" value="SmpB"/>
</dbReference>
<dbReference type="InterPro" id="IPR000037">
    <property type="entry name" value="SsrA-bd_prot"/>
</dbReference>
<dbReference type="InterPro" id="IPR020081">
    <property type="entry name" value="SsrA-bd_prot_CS"/>
</dbReference>
<dbReference type="NCBIfam" id="NF003843">
    <property type="entry name" value="PRK05422.1"/>
    <property type="match status" value="1"/>
</dbReference>
<dbReference type="NCBIfam" id="TIGR00086">
    <property type="entry name" value="smpB"/>
    <property type="match status" value="1"/>
</dbReference>
<dbReference type="PANTHER" id="PTHR30308:SF2">
    <property type="entry name" value="SSRA-BINDING PROTEIN"/>
    <property type="match status" value="1"/>
</dbReference>
<dbReference type="PANTHER" id="PTHR30308">
    <property type="entry name" value="TMRNA-BINDING COMPONENT OF TRANS-TRANSLATION TAGGING COMPLEX"/>
    <property type="match status" value="1"/>
</dbReference>
<dbReference type="Pfam" id="PF01668">
    <property type="entry name" value="SmpB"/>
    <property type="match status" value="1"/>
</dbReference>
<dbReference type="SUPFAM" id="SSF74982">
    <property type="entry name" value="Small protein B (SmpB)"/>
    <property type="match status" value="1"/>
</dbReference>
<dbReference type="PROSITE" id="PS01317">
    <property type="entry name" value="SSRP"/>
    <property type="match status" value="1"/>
</dbReference>
<comment type="function">
    <text evidence="1">Required for rescue of stalled ribosomes mediated by trans-translation. Binds to transfer-messenger RNA (tmRNA), required for stable association of tmRNA with ribosomes. tmRNA and SmpB together mimic tRNA shape, replacing the anticodon stem-loop with SmpB. tmRNA is encoded by the ssrA gene; the 2 termini fold to resemble tRNA(Ala) and it encodes a 'tag peptide', a short internal open reading frame. During trans-translation Ala-aminoacylated tmRNA acts like a tRNA, entering the A-site of stalled ribosomes, displacing the stalled mRNA. The ribosome then switches to translate the ORF on the tmRNA; the nascent peptide is terminated with the 'tag peptide' encoded by the tmRNA and targeted for degradation. The ribosome is freed to recommence translation, which seems to be the essential function of trans-translation.</text>
</comment>
<comment type="subcellular location">
    <subcellularLocation>
        <location evidence="1">Cytoplasm</location>
    </subcellularLocation>
    <text evidence="1">The tmRNA-SmpB complex associates with stalled 70S ribosomes.</text>
</comment>
<comment type="similarity">
    <text evidence="1">Belongs to the SmpB family.</text>
</comment>
<reference key="1">
    <citation type="journal article" date="2009" name="Environ. Microbiol.">
        <title>Contribution of mobile genetic elements to Desulfovibrio vulgaris genome plasticity.</title>
        <authorList>
            <person name="Walker C.B."/>
            <person name="Stolyar S."/>
            <person name="Chivian D."/>
            <person name="Pinel N."/>
            <person name="Gabster J.A."/>
            <person name="Dehal P.S."/>
            <person name="He Z."/>
            <person name="Yang Z.K."/>
            <person name="Yen H.C."/>
            <person name="Zhou J."/>
            <person name="Wall J.D."/>
            <person name="Hazen T.C."/>
            <person name="Arkin A.P."/>
            <person name="Stahl D.A."/>
        </authorList>
    </citation>
    <scope>NUCLEOTIDE SEQUENCE [LARGE SCALE GENOMIC DNA]</scope>
    <source>
        <strain>DP4</strain>
    </source>
</reference>